<name>NADA_YERPN</name>
<keyword id="KW-0004">4Fe-4S</keyword>
<keyword id="KW-0963">Cytoplasm</keyword>
<keyword id="KW-0408">Iron</keyword>
<keyword id="KW-0411">Iron-sulfur</keyword>
<keyword id="KW-0479">Metal-binding</keyword>
<keyword id="KW-0662">Pyridine nucleotide biosynthesis</keyword>
<keyword id="KW-0808">Transferase</keyword>
<organism>
    <name type="scientific">Yersinia pestis bv. Antiqua (strain Nepal516)</name>
    <dbReference type="NCBI Taxonomy" id="377628"/>
    <lineage>
        <taxon>Bacteria</taxon>
        <taxon>Pseudomonadati</taxon>
        <taxon>Pseudomonadota</taxon>
        <taxon>Gammaproteobacteria</taxon>
        <taxon>Enterobacterales</taxon>
        <taxon>Yersiniaceae</taxon>
        <taxon>Yersinia</taxon>
    </lineage>
</organism>
<accession>Q1CFN2</accession>
<accession>C4GWP4</accession>
<dbReference type="EC" id="2.5.1.72" evidence="1"/>
<dbReference type="EMBL" id="CP000305">
    <property type="protein sequence ID" value="ABG19198.1"/>
    <property type="molecule type" value="Genomic_DNA"/>
</dbReference>
<dbReference type="EMBL" id="ACNQ01000017">
    <property type="protein sequence ID" value="EEO75344.1"/>
    <property type="molecule type" value="Genomic_DNA"/>
</dbReference>
<dbReference type="RefSeq" id="WP_002228627.1">
    <property type="nucleotide sequence ID" value="NZ_ACNQ01000017.1"/>
</dbReference>
<dbReference type="SMR" id="Q1CFN2"/>
<dbReference type="KEGG" id="ypn:YPN_2871"/>
<dbReference type="HOGENOM" id="CLU_047382_1_0_6"/>
<dbReference type="UniPathway" id="UPA00253">
    <property type="reaction ID" value="UER00327"/>
</dbReference>
<dbReference type="Proteomes" id="UP000008936">
    <property type="component" value="Chromosome"/>
</dbReference>
<dbReference type="GO" id="GO:0005829">
    <property type="term" value="C:cytosol"/>
    <property type="evidence" value="ECO:0007669"/>
    <property type="project" value="TreeGrafter"/>
</dbReference>
<dbReference type="GO" id="GO:0051539">
    <property type="term" value="F:4 iron, 4 sulfur cluster binding"/>
    <property type="evidence" value="ECO:0007669"/>
    <property type="project" value="UniProtKB-KW"/>
</dbReference>
<dbReference type="GO" id="GO:0046872">
    <property type="term" value="F:metal ion binding"/>
    <property type="evidence" value="ECO:0007669"/>
    <property type="project" value="UniProtKB-KW"/>
</dbReference>
<dbReference type="GO" id="GO:0008987">
    <property type="term" value="F:quinolinate synthetase A activity"/>
    <property type="evidence" value="ECO:0007669"/>
    <property type="project" value="UniProtKB-UniRule"/>
</dbReference>
<dbReference type="GO" id="GO:0034628">
    <property type="term" value="P:'de novo' NAD biosynthetic process from L-aspartate"/>
    <property type="evidence" value="ECO:0007669"/>
    <property type="project" value="TreeGrafter"/>
</dbReference>
<dbReference type="FunFam" id="3.40.50.10800:FF:000003">
    <property type="entry name" value="Quinolinate synthase A"/>
    <property type="match status" value="1"/>
</dbReference>
<dbReference type="Gene3D" id="3.40.50.10800">
    <property type="entry name" value="NadA-like"/>
    <property type="match status" value="3"/>
</dbReference>
<dbReference type="HAMAP" id="MF_00567">
    <property type="entry name" value="NadA_type1"/>
    <property type="match status" value="1"/>
</dbReference>
<dbReference type="InterPro" id="IPR003473">
    <property type="entry name" value="NadA"/>
</dbReference>
<dbReference type="InterPro" id="IPR036094">
    <property type="entry name" value="NadA_sf"/>
</dbReference>
<dbReference type="InterPro" id="IPR023513">
    <property type="entry name" value="Quinolinate_synth_A_type1"/>
</dbReference>
<dbReference type="NCBIfam" id="TIGR00550">
    <property type="entry name" value="nadA"/>
    <property type="match status" value="1"/>
</dbReference>
<dbReference type="NCBIfam" id="NF006877">
    <property type="entry name" value="PRK09375.1-1"/>
    <property type="match status" value="1"/>
</dbReference>
<dbReference type="NCBIfam" id="NF006878">
    <property type="entry name" value="PRK09375.1-2"/>
    <property type="match status" value="1"/>
</dbReference>
<dbReference type="PANTHER" id="PTHR30573:SF0">
    <property type="entry name" value="QUINOLINATE SYNTHASE, CHLOROPLASTIC"/>
    <property type="match status" value="1"/>
</dbReference>
<dbReference type="PANTHER" id="PTHR30573">
    <property type="entry name" value="QUINOLINATE SYNTHETASE A"/>
    <property type="match status" value="1"/>
</dbReference>
<dbReference type="Pfam" id="PF02445">
    <property type="entry name" value="NadA"/>
    <property type="match status" value="1"/>
</dbReference>
<dbReference type="SUPFAM" id="SSF142754">
    <property type="entry name" value="NadA-like"/>
    <property type="match status" value="1"/>
</dbReference>
<feature type="chain" id="PRO_1000024979" description="Quinolinate synthase">
    <location>
        <begin position="1"/>
        <end position="353"/>
    </location>
</feature>
<feature type="binding site" evidence="1">
    <location>
        <position position="47"/>
    </location>
    <ligand>
        <name>iminosuccinate</name>
        <dbReference type="ChEBI" id="CHEBI:77875"/>
    </ligand>
</feature>
<feature type="binding site" evidence="1">
    <location>
        <position position="68"/>
    </location>
    <ligand>
        <name>iminosuccinate</name>
        <dbReference type="ChEBI" id="CHEBI:77875"/>
    </ligand>
</feature>
<feature type="binding site" evidence="1">
    <location>
        <position position="113"/>
    </location>
    <ligand>
        <name>[4Fe-4S] cluster</name>
        <dbReference type="ChEBI" id="CHEBI:49883"/>
    </ligand>
</feature>
<feature type="binding site" evidence="1">
    <location>
        <begin position="139"/>
        <end position="141"/>
    </location>
    <ligand>
        <name>iminosuccinate</name>
        <dbReference type="ChEBI" id="CHEBI:77875"/>
    </ligand>
</feature>
<feature type="binding site" evidence="1">
    <location>
        <position position="156"/>
    </location>
    <ligand>
        <name>iminosuccinate</name>
        <dbReference type="ChEBI" id="CHEBI:77875"/>
    </ligand>
</feature>
<feature type="binding site" evidence="1">
    <location>
        <position position="200"/>
    </location>
    <ligand>
        <name>[4Fe-4S] cluster</name>
        <dbReference type="ChEBI" id="CHEBI:49883"/>
    </ligand>
</feature>
<feature type="binding site" evidence="1">
    <location>
        <begin position="226"/>
        <end position="228"/>
    </location>
    <ligand>
        <name>iminosuccinate</name>
        <dbReference type="ChEBI" id="CHEBI:77875"/>
    </ligand>
</feature>
<feature type="binding site" evidence="1">
    <location>
        <position position="243"/>
    </location>
    <ligand>
        <name>iminosuccinate</name>
        <dbReference type="ChEBI" id="CHEBI:77875"/>
    </ligand>
</feature>
<feature type="binding site" evidence="1">
    <location>
        <position position="297"/>
    </location>
    <ligand>
        <name>[4Fe-4S] cluster</name>
        <dbReference type="ChEBI" id="CHEBI:49883"/>
    </ligand>
</feature>
<protein>
    <recommendedName>
        <fullName evidence="1">Quinolinate synthase</fullName>
        <ecNumber evidence="1">2.5.1.72</ecNumber>
    </recommendedName>
</protein>
<sequence>MSEIFDVNAAIYPFPARPVPLDTNEKAFYREKIKTLLKQRDAVLVAHYYTDPEIQALAEETGGCVADSLEMARFGNNHPASTLLVAGVRFMGETAKILNPEKKVLMPTLNAECSLDLGCPVDEFTAFCDSHPDRTVVVYANTSAAVKAKADWVVTSSIAVELIEHLDSLGEKIIWAPDRHLGSYVQKKSGADVLCWQGACIVHDEFKTQALARMKALYPDAAVLVHPESPQAVVDMADAVGSTSQLIQAAKTLPQKTLIVATDRGIFYKMQQACPDKELFEAPTAGEGATCRSCAHCPWMAMNGLRAIAEGLEQGGGMHEIHVDEELRQQALIPLNRMLDFANQLKLQVKGNA</sequence>
<comment type="function">
    <text evidence="1">Catalyzes the condensation of iminoaspartate with dihydroxyacetone phosphate to form quinolinate.</text>
</comment>
<comment type="catalytic activity">
    <reaction evidence="1">
        <text>iminosuccinate + dihydroxyacetone phosphate = quinolinate + phosphate + 2 H2O + H(+)</text>
        <dbReference type="Rhea" id="RHEA:25888"/>
        <dbReference type="ChEBI" id="CHEBI:15377"/>
        <dbReference type="ChEBI" id="CHEBI:15378"/>
        <dbReference type="ChEBI" id="CHEBI:29959"/>
        <dbReference type="ChEBI" id="CHEBI:43474"/>
        <dbReference type="ChEBI" id="CHEBI:57642"/>
        <dbReference type="ChEBI" id="CHEBI:77875"/>
        <dbReference type="EC" id="2.5.1.72"/>
    </reaction>
    <physiologicalReaction direction="left-to-right" evidence="1">
        <dbReference type="Rhea" id="RHEA:25889"/>
    </physiologicalReaction>
</comment>
<comment type="cofactor">
    <cofactor evidence="1">
        <name>[4Fe-4S] cluster</name>
        <dbReference type="ChEBI" id="CHEBI:49883"/>
    </cofactor>
    <text evidence="1">Binds 1 [4Fe-4S] cluster per subunit.</text>
</comment>
<comment type="pathway">
    <text evidence="1">Cofactor biosynthesis; NAD(+) biosynthesis; quinolinate from iminoaspartate: step 1/1.</text>
</comment>
<comment type="subcellular location">
    <subcellularLocation>
        <location evidence="1">Cytoplasm</location>
    </subcellularLocation>
</comment>
<comment type="similarity">
    <text evidence="1">Belongs to the quinolinate synthase family. Type 1 subfamily.</text>
</comment>
<evidence type="ECO:0000255" key="1">
    <source>
        <dbReference type="HAMAP-Rule" id="MF_00567"/>
    </source>
</evidence>
<reference key="1">
    <citation type="journal article" date="2006" name="J. Bacteriol.">
        <title>Complete genome sequence of Yersinia pestis strains Antiqua and Nepal516: evidence of gene reduction in an emerging pathogen.</title>
        <authorList>
            <person name="Chain P.S.G."/>
            <person name="Hu P."/>
            <person name="Malfatti S.A."/>
            <person name="Radnedge L."/>
            <person name="Larimer F."/>
            <person name="Vergez L.M."/>
            <person name="Worsham P."/>
            <person name="Chu M.C."/>
            <person name="Andersen G.L."/>
        </authorList>
    </citation>
    <scope>NUCLEOTIDE SEQUENCE [LARGE SCALE GENOMIC DNA]</scope>
    <source>
        <strain>Nepal516</strain>
    </source>
</reference>
<reference key="2">
    <citation type="submission" date="2009-04" db="EMBL/GenBank/DDBJ databases">
        <title>Yersinia pestis Nepal516A whole genome shotgun sequencing project.</title>
        <authorList>
            <person name="Plunkett G. III"/>
            <person name="Anderson B.D."/>
            <person name="Baumler D.J."/>
            <person name="Burland V."/>
            <person name="Cabot E.L."/>
            <person name="Glasner J.D."/>
            <person name="Mau B."/>
            <person name="Neeno-Eckwall E."/>
            <person name="Perna N.T."/>
            <person name="Munk A.C."/>
            <person name="Tapia R."/>
            <person name="Green L.D."/>
            <person name="Rogers Y.C."/>
            <person name="Detter J.C."/>
            <person name="Bruce D.C."/>
            <person name="Brettin T.S."/>
        </authorList>
    </citation>
    <scope>NUCLEOTIDE SEQUENCE [LARGE SCALE GENOMIC DNA]</scope>
    <source>
        <strain>Nepal516</strain>
    </source>
</reference>
<proteinExistence type="inferred from homology"/>
<gene>
    <name evidence="1" type="primary">nadA</name>
    <name type="ordered locus">YPN_2871</name>
    <name type="ORF">YP516_3246</name>
</gene>